<sequence length="499" mass="55632">MNAPESLPVEFPVFDNSFAALPEAFYTRLEPHPLPEPYVVGVSTEVADLLGLPAELMNSPQFAEIFAGNRLLPGSEPLAAVYSGHQFGVWAGQLGDGRAHLLGGLRNDQGHWEIQLKGAGRTPYSRGADGRAVLRSSIREFLCSEAMAGLGVPTTRALCVIGADQPVRREEIETAALVARVAPGFVRFGSFEHWASRDRSRELQQLADYVIDTFRPACRDAENPYDALLRDISRRTGELIAHWMAVGFMHGVMNTDNMSILGLTLDYGPFGFMEAFDAGHICNHSDHQGRYTYRNQPHVAQWNLYCLADAFLPLLKHPDISRVAVDETYGDAFAQTFERLMCAKLGLRHALPDDENFIGETFGFLQQHRPDFTLFFRRLSRLSGGLDGEAMAKADAPLRDLFVDRAACDAWLANWRARLAQTPWDDGERQASMLAANPKYVLRNWLAEAAIRKAKLKDYSDVQRLLTCLRRPYDEQPEFDDLAALPPDWASGLEVSCSS</sequence>
<organism>
    <name type="scientific">Dechloromonas aromatica (strain RCB)</name>
    <dbReference type="NCBI Taxonomy" id="159087"/>
    <lineage>
        <taxon>Bacteria</taxon>
        <taxon>Pseudomonadati</taxon>
        <taxon>Pseudomonadota</taxon>
        <taxon>Betaproteobacteria</taxon>
        <taxon>Rhodocyclales</taxon>
        <taxon>Azonexaceae</taxon>
        <taxon>Dechloromonas</taxon>
    </lineage>
</organism>
<evidence type="ECO:0000255" key="1">
    <source>
        <dbReference type="HAMAP-Rule" id="MF_00692"/>
    </source>
</evidence>
<reference key="1">
    <citation type="journal article" date="2009" name="BMC Genomics">
        <title>Metabolic analysis of the soil microbe Dechloromonas aromatica str. RCB: indications of a surprisingly complex life-style and cryptic anaerobic pathways for aromatic degradation.</title>
        <authorList>
            <person name="Salinero K.K."/>
            <person name="Keller K."/>
            <person name="Feil W.S."/>
            <person name="Feil H."/>
            <person name="Trong S."/>
            <person name="Di Bartolo G."/>
            <person name="Lapidus A."/>
        </authorList>
    </citation>
    <scope>NUCLEOTIDE SEQUENCE [LARGE SCALE GENOMIC DNA]</scope>
    <source>
        <strain>RCB</strain>
    </source>
</reference>
<gene>
    <name evidence="1" type="primary">ydiU</name>
    <name evidence="1" type="synonym">selO</name>
    <name type="ordered locus">Daro_4038</name>
</gene>
<accession>Q478G7</accession>
<name>SELO_DECAR</name>
<proteinExistence type="inferred from homology"/>
<keyword id="KW-0067">ATP-binding</keyword>
<keyword id="KW-0460">Magnesium</keyword>
<keyword id="KW-0464">Manganese</keyword>
<keyword id="KW-0479">Metal-binding</keyword>
<keyword id="KW-0547">Nucleotide-binding</keyword>
<keyword id="KW-0548">Nucleotidyltransferase</keyword>
<keyword id="KW-0808">Transferase</keyword>
<feature type="chain" id="PRO_0000271823" description="Protein nucleotidyltransferase YdiU">
    <location>
        <begin position="1"/>
        <end position="499"/>
    </location>
</feature>
<feature type="active site" description="Proton acceptor" evidence="1">
    <location>
        <position position="256"/>
    </location>
</feature>
<feature type="binding site" evidence="1">
    <location>
        <position position="95"/>
    </location>
    <ligand>
        <name>ATP</name>
        <dbReference type="ChEBI" id="CHEBI:30616"/>
    </ligand>
</feature>
<feature type="binding site" evidence="1">
    <location>
        <position position="97"/>
    </location>
    <ligand>
        <name>ATP</name>
        <dbReference type="ChEBI" id="CHEBI:30616"/>
    </ligand>
</feature>
<feature type="binding site" evidence="1">
    <location>
        <position position="98"/>
    </location>
    <ligand>
        <name>ATP</name>
        <dbReference type="ChEBI" id="CHEBI:30616"/>
    </ligand>
</feature>
<feature type="binding site" evidence="1">
    <location>
        <position position="117"/>
    </location>
    <ligand>
        <name>ATP</name>
        <dbReference type="ChEBI" id="CHEBI:30616"/>
    </ligand>
</feature>
<feature type="binding site" evidence="1">
    <location>
        <position position="129"/>
    </location>
    <ligand>
        <name>ATP</name>
        <dbReference type="ChEBI" id="CHEBI:30616"/>
    </ligand>
</feature>
<feature type="binding site" evidence="1">
    <location>
        <position position="130"/>
    </location>
    <ligand>
        <name>ATP</name>
        <dbReference type="ChEBI" id="CHEBI:30616"/>
    </ligand>
</feature>
<feature type="binding site" evidence="1">
    <location>
        <position position="180"/>
    </location>
    <ligand>
        <name>ATP</name>
        <dbReference type="ChEBI" id="CHEBI:30616"/>
    </ligand>
</feature>
<feature type="binding site" evidence="1">
    <location>
        <position position="187"/>
    </location>
    <ligand>
        <name>ATP</name>
        <dbReference type="ChEBI" id="CHEBI:30616"/>
    </ligand>
</feature>
<feature type="binding site" evidence="1">
    <location>
        <position position="257"/>
    </location>
    <ligand>
        <name>Mg(2+)</name>
        <dbReference type="ChEBI" id="CHEBI:18420"/>
    </ligand>
</feature>
<feature type="binding site" evidence="1">
    <location>
        <position position="266"/>
    </location>
    <ligand>
        <name>ATP</name>
        <dbReference type="ChEBI" id="CHEBI:30616"/>
    </ligand>
</feature>
<feature type="binding site" evidence="1">
    <location>
        <position position="266"/>
    </location>
    <ligand>
        <name>Mg(2+)</name>
        <dbReference type="ChEBI" id="CHEBI:18420"/>
    </ligand>
</feature>
<protein>
    <recommendedName>
        <fullName evidence="1">Protein nucleotidyltransferase YdiU</fullName>
        <ecNumber evidence="1">2.7.7.-</ecNumber>
    </recommendedName>
    <alternativeName>
        <fullName evidence="1">Protein adenylyltransferase YdiU</fullName>
        <ecNumber evidence="1">2.7.7.108</ecNumber>
    </alternativeName>
    <alternativeName>
        <fullName evidence="1">Protein uridylyltransferase YdiU</fullName>
        <ecNumber evidence="1">2.7.7.-</ecNumber>
    </alternativeName>
</protein>
<comment type="function">
    <text evidence="1">Nucleotidyltransferase involved in the post-translational modification of proteins. It can catalyze the addition of adenosine monophosphate (AMP) or uridine monophosphate (UMP) to a protein, resulting in modifications known as AMPylation and UMPylation.</text>
</comment>
<comment type="catalytic activity">
    <reaction evidence="1">
        <text>L-seryl-[protein] + ATP = 3-O-(5'-adenylyl)-L-seryl-[protein] + diphosphate</text>
        <dbReference type="Rhea" id="RHEA:58120"/>
        <dbReference type="Rhea" id="RHEA-COMP:9863"/>
        <dbReference type="Rhea" id="RHEA-COMP:15073"/>
        <dbReference type="ChEBI" id="CHEBI:29999"/>
        <dbReference type="ChEBI" id="CHEBI:30616"/>
        <dbReference type="ChEBI" id="CHEBI:33019"/>
        <dbReference type="ChEBI" id="CHEBI:142516"/>
        <dbReference type="EC" id="2.7.7.108"/>
    </reaction>
</comment>
<comment type="catalytic activity">
    <reaction evidence="1">
        <text>L-threonyl-[protein] + ATP = 3-O-(5'-adenylyl)-L-threonyl-[protein] + diphosphate</text>
        <dbReference type="Rhea" id="RHEA:54292"/>
        <dbReference type="Rhea" id="RHEA-COMP:11060"/>
        <dbReference type="Rhea" id="RHEA-COMP:13847"/>
        <dbReference type="ChEBI" id="CHEBI:30013"/>
        <dbReference type="ChEBI" id="CHEBI:30616"/>
        <dbReference type="ChEBI" id="CHEBI:33019"/>
        <dbReference type="ChEBI" id="CHEBI:138113"/>
        <dbReference type="EC" id="2.7.7.108"/>
    </reaction>
</comment>
<comment type="catalytic activity">
    <reaction evidence="1">
        <text>L-tyrosyl-[protein] + ATP = O-(5'-adenylyl)-L-tyrosyl-[protein] + diphosphate</text>
        <dbReference type="Rhea" id="RHEA:54288"/>
        <dbReference type="Rhea" id="RHEA-COMP:10136"/>
        <dbReference type="Rhea" id="RHEA-COMP:13846"/>
        <dbReference type="ChEBI" id="CHEBI:30616"/>
        <dbReference type="ChEBI" id="CHEBI:33019"/>
        <dbReference type="ChEBI" id="CHEBI:46858"/>
        <dbReference type="ChEBI" id="CHEBI:83624"/>
        <dbReference type="EC" id="2.7.7.108"/>
    </reaction>
</comment>
<comment type="catalytic activity">
    <reaction evidence="1">
        <text>L-histidyl-[protein] + UTP = N(tele)-(5'-uridylyl)-L-histidyl-[protein] + diphosphate</text>
        <dbReference type="Rhea" id="RHEA:83891"/>
        <dbReference type="Rhea" id="RHEA-COMP:9745"/>
        <dbReference type="Rhea" id="RHEA-COMP:20239"/>
        <dbReference type="ChEBI" id="CHEBI:29979"/>
        <dbReference type="ChEBI" id="CHEBI:33019"/>
        <dbReference type="ChEBI" id="CHEBI:46398"/>
        <dbReference type="ChEBI" id="CHEBI:233474"/>
    </reaction>
</comment>
<comment type="catalytic activity">
    <reaction evidence="1">
        <text>L-seryl-[protein] + UTP = O-(5'-uridylyl)-L-seryl-[protein] + diphosphate</text>
        <dbReference type="Rhea" id="RHEA:64604"/>
        <dbReference type="Rhea" id="RHEA-COMP:9863"/>
        <dbReference type="Rhea" id="RHEA-COMP:16635"/>
        <dbReference type="ChEBI" id="CHEBI:29999"/>
        <dbReference type="ChEBI" id="CHEBI:33019"/>
        <dbReference type="ChEBI" id="CHEBI:46398"/>
        <dbReference type="ChEBI" id="CHEBI:156051"/>
    </reaction>
</comment>
<comment type="catalytic activity">
    <reaction evidence="1">
        <text>L-tyrosyl-[protein] + UTP = O-(5'-uridylyl)-L-tyrosyl-[protein] + diphosphate</text>
        <dbReference type="Rhea" id="RHEA:83887"/>
        <dbReference type="Rhea" id="RHEA-COMP:10136"/>
        <dbReference type="Rhea" id="RHEA-COMP:20238"/>
        <dbReference type="ChEBI" id="CHEBI:33019"/>
        <dbReference type="ChEBI" id="CHEBI:46398"/>
        <dbReference type="ChEBI" id="CHEBI:46858"/>
        <dbReference type="ChEBI" id="CHEBI:90602"/>
    </reaction>
</comment>
<comment type="cofactor">
    <cofactor evidence="1">
        <name>Mg(2+)</name>
        <dbReference type="ChEBI" id="CHEBI:18420"/>
    </cofactor>
    <cofactor evidence="1">
        <name>Mn(2+)</name>
        <dbReference type="ChEBI" id="CHEBI:29035"/>
    </cofactor>
</comment>
<comment type="similarity">
    <text evidence="1">Belongs to the SELO family.</text>
</comment>
<dbReference type="EC" id="2.7.7.-" evidence="1"/>
<dbReference type="EC" id="2.7.7.108" evidence="1"/>
<dbReference type="EMBL" id="CP000089">
    <property type="protein sequence ID" value="AAZ48764.1"/>
    <property type="molecule type" value="Genomic_DNA"/>
</dbReference>
<dbReference type="SMR" id="Q478G7"/>
<dbReference type="STRING" id="159087.Daro_4038"/>
<dbReference type="KEGG" id="dar:Daro_4038"/>
<dbReference type="eggNOG" id="COG0397">
    <property type="taxonomic scope" value="Bacteria"/>
</dbReference>
<dbReference type="HOGENOM" id="CLU_010245_4_0_4"/>
<dbReference type="OrthoDB" id="9776281at2"/>
<dbReference type="GO" id="GO:0070733">
    <property type="term" value="F:AMPylase activity"/>
    <property type="evidence" value="ECO:0007669"/>
    <property type="project" value="RHEA"/>
</dbReference>
<dbReference type="GO" id="GO:0005524">
    <property type="term" value="F:ATP binding"/>
    <property type="evidence" value="ECO:0007669"/>
    <property type="project" value="UniProtKB-UniRule"/>
</dbReference>
<dbReference type="GO" id="GO:0000287">
    <property type="term" value="F:magnesium ion binding"/>
    <property type="evidence" value="ECO:0007669"/>
    <property type="project" value="UniProtKB-UniRule"/>
</dbReference>
<dbReference type="HAMAP" id="MF_00692">
    <property type="entry name" value="YdiU_SelO"/>
    <property type="match status" value="1"/>
</dbReference>
<dbReference type="InterPro" id="IPR003846">
    <property type="entry name" value="SelO"/>
</dbReference>
<dbReference type="NCBIfam" id="NF000658">
    <property type="entry name" value="PRK00029.1"/>
    <property type="match status" value="1"/>
</dbReference>
<dbReference type="PANTHER" id="PTHR32057">
    <property type="entry name" value="PROTEIN ADENYLYLTRANSFERASE SELO, MITOCHONDRIAL"/>
    <property type="match status" value="1"/>
</dbReference>
<dbReference type="PANTHER" id="PTHR32057:SF14">
    <property type="entry name" value="PROTEIN ADENYLYLTRANSFERASE SELO, MITOCHONDRIAL"/>
    <property type="match status" value="1"/>
</dbReference>
<dbReference type="Pfam" id="PF02696">
    <property type="entry name" value="SelO"/>
    <property type="match status" value="1"/>
</dbReference>